<feature type="chain" id="PRO_0000285942" description="DNA topoisomerase 1">
    <location>
        <begin position="1"/>
        <end position="689"/>
    </location>
</feature>
<feature type="domain" description="Toprim" evidence="1">
    <location>
        <begin position="3"/>
        <end position="113"/>
    </location>
</feature>
<feature type="domain" description="Topo IA-type catalytic" evidence="2">
    <location>
        <begin position="129"/>
        <end position="557"/>
    </location>
</feature>
<feature type="zinc finger region" description="C4-type 1">
    <location>
        <begin position="577"/>
        <end position="603"/>
    </location>
</feature>
<feature type="zinc finger region" description="C4-type 2">
    <location>
        <begin position="617"/>
        <end position="645"/>
    </location>
</feature>
<feature type="zinc finger region" description="C4-type 3">
    <location>
        <begin position="658"/>
        <end position="681"/>
    </location>
</feature>
<feature type="region of interest" description="Interaction with DNA" evidence="1">
    <location>
        <begin position="163"/>
        <end position="168"/>
    </location>
</feature>
<feature type="region of interest" description="Disordered" evidence="3">
    <location>
        <begin position="328"/>
        <end position="356"/>
    </location>
</feature>
<feature type="active site" description="O-(5'-phospho-DNA)-tyrosine intermediate" evidence="2">
    <location>
        <position position="298"/>
    </location>
</feature>
<feature type="binding site" evidence="1">
    <location>
        <position position="9"/>
    </location>
    <ligand>
        <name>Mg(2+)</name>
        <dbReference type="ChEBI" id="CHEBI:18420"/>
        <note>catalytic</note>
    </ligand>
</feature>
<feature type="binding site" evidence="1">
    <location>
        <position position="82"/>
    </location>
    <ligand>
        <name>Mg(2+)</name>
        <dbReference type="ChEBI" id="CHEBI:18420"/>
        <note>catalytic</note>
    </ligand>
</feature>
<feature type="site" description="Interaction with DNA" evidence="1">
    <location>
        <position position="33"/>
    </location>
</feature>
<feature type="site" description="Interaction with DNA" evidence="1">
    <location>
        <position position="139"/>
    </location>
</feature>
<feature type="site" description="Interaction with DNA" evidence="1">
    <location>
        <position position="140"/>
    </location>
</feature>
<feature type="site" description="Interaction with DNA" evidence="1">
    <location>
        <position position="143"/>
    </location>
</feature>
<feature type="site" description="Interaction with DNA" evidence="1">
    <location>
        <position position="148"/>
    </location>
</feature>
<feature type="site" description="Interaction with DNA" evidence="1">
    <location>
        <position position="155"/>
    </location>
</feature>
<feature type="site" description="Interaction with DNA" evidence="1">
    <location>
        <position position="300"/>
    </location>
</feature>
<feature type="site" description="Interaction with DNA" evidence="1">
    <location>
        <position position="488"/>
    </location>
</feature>
<evidence type="ECO:0000255" key="1">
    <source>
        <dbReference type="HAMAP-Rule" id="MF_00952"/>
    </source>
</evidence>
<evidence type="ECO:0000255" key="2">
    <source>
        <dbReference type="PROSITE-ProRule" id="PRU01383"/>
    </source>
</evidence>
<evidence type="ECO:0000256" key="3">
    <source>
        <dbReference type="SAM" id="MobiDB-lite"/>
    </source>
</evidence>
<evidence type="ECO:0000305" key="4"/>
<reference key="1">
    <citation type="book" date="2006" name="Gram positive pathogens, 2nd edition">
        <title>The Staphylococcus aureus NCTC 8325 genome.</title>
        <editorList>
            <person name="Fischetti V."/>
            <person name="Novick R."/>
            <person name="Ferretti J."/>
            <person name="Portnoy D."/>
            <person name="Rood J."/>
        </editorList>
        <authorList>
            <person name="Gillaspy A.F."/>
            <person name="Worrell V."/>
            <person name="Orvis J."/>
            <person name="Roe B.A."/>
            <person name="Dyer D.W."/>
            <person name="Iandolo J.J."/>
        </authorList>
    </citation>
    <scope>NUCLEOTIDE SEQUENCE [LARGE SCALE GENOMIC DNA]</scope>
    <source>
        <strain>NCTC 8325 / PS 47</strain>
    </source>
</reference>
<sequence>MADNLVIVESPAKAKTIEKYLGKKYKVIASMGHVRDLPRSQMGVDTEDNYEPKYITIRGKGPVVKELKKHAKKAKNVFLASDPDREGEAIAWHLSKILELEDSKENRVVFNEITKDAVKESFKNPREIEMNLVDAQQARRILDRLVGYNISPVLWKKVKKGLSAGRVQSVALRLVIDRENEIRNFKPEEYWTIEGEFRYKKSKFNAKFLHYKNKPFKLKTKKDVEKITAALDGDQFEITNVTKKEKTRNPANPFTTSTLQQEAARKLNFKARKTMMVAQQLYEGIDLKKQGTIGLITYMRTDSTRISDTAKVEAKQYITDKYGESYTSKRKASGKQGDQDAHEAIRPSSTMRTPDDMKSFLTKDQYRLYKLIWERFVASQMAPAILDTVSLDITQGDIKFRANGQTIKFKGFMTLYVETKDDSDSEKENKLPKLEQGDKVTATQIEPAQHYTQPPPRYTEARLVKTLEELKIGRPSTYAPTIDTIQKRNYVKLESKRFVPTELGEIVHEQVKEYFPEIIDVEFTVNMETLLDKIAEGDITWRKVIDGFFSSFKQDVERAEEEMEKIEIKDEPAGEDCEICGSPMVIKMGRYGKFMACSNFPDCRNTKAIVKSIGVKCPKCNDGDVVERKSKKNRVFYGCSKYPECDFISWDKPIGRDCPKCNQYLVENKKGKTTQVICSNCDYKEAAQK</sequence>
<gene>
    <name evidence="1" type="primary">topA</name>
    <name type="ordered locus">SAOUHSC_01222</name>
</gene>
<comment type="function">
    <text evidence="1">Releases the supercoiling and torsional tension of DNA, which is introduced during the DNA replication and transcription, by transiently cleaving and rejoining one strand of the DNA duplex. Introduces a single-strand break via transesterification at a target site in duplex DNA. The scissile phosphodiester is attacked by the catalytic tyrosine of the enzyme, resulting in the formation of a DNA-(5'-phosphotyrosyl)-enzyme intermediate and the expulsion of a 3'-OH DNA strand. The free DNA strand then undergoes passage around the unbroken strand, thus removing DNA supercoils. Finally, in the religation step, the DNA 3'-OH attacks the covalent intermediate to expel the active-site tyrosine and restore the DNA phosphodiester backbone.</text>
</comment>
<comment type="catalytic activity">
    <reaction evidence="1">
        <text>ATP-independent breakage of single-stranded DNA, followed by passage and rejoining.</text>
        <dbReference type="EC" id="5.6.2.1"/>
    </reaction>
</comment>
<comment type="cofactor">
    <cofactor evidence="1">
        <name>Mg(2+)</name>
        <dbReference type="ChEBI" id="CHEBI:18420"/>
    </cofactor>
</comment>
<comment type="subunit">
    <text evidence="1">Monomer.</text>
</comment>
<comment type="similarity">
    <text evidence="1">Belongs to the type IA topoisomerase family.</text>
</comment>
<comment type="sequence caution" evidence="4">
    <conflict type="erroneous initiation">
        <sequence resource="EMBL-CDS" id="ABD30326"/>
    </conflict>
</comment>
<protein>
    <recommendedName>
        <fullName evidence="1">DNA topoisomerase 1</fullName>
        <ecNumber evidence="1">5.6.2.1</ecNumber>
    </recommendedName>
    <alternativeName>
        <fullName evidence="1">DNA topoisomerase I</fullName>
    </alternativeName>
    <alternativeName>
        <fullName>Omega-protein</fullName>
    </alternativeName>
    <alternativeName>
        <fullName>Relaxing enzyme</fullName>
    </alternativeName>
    <alternativeName>
        <fullName>Swivelase</fullName>
    </alternativeName>
    <alternativeName>
        <fullName>Untwisting enzyme</fullName>
    </alternativeName>
</protein>
<dbReference type="EC" id="5.6.2.1" evidence="1"/>
<dbReference type="EMBL" id="CP000253">
    <property type="protein sequence ID" value="ABD30326.1"/>
    <property type="status" value="ALT_INIT"/>
    <property type="molecule type" value="Genomic_DNA"/>
</dbReference>
<dbReference type="RefSeq" id="YP_499758.1">
    <property type="nucleotide sequence ID" value="NC_007795.1"/>
</dbReference>
<dbReference type="SMR" id="Q2FZ32"/>
<dbReference type="STRING" id="93061.SAOUHSC_01222"/>
<dbReference type="PaxDb" id="1280-SAXN108_1252"/>
<dbReference type="GeneID" id="3920250"/>
<dbReference type="KEGG" id="sao:SAOUHSC_01222"/>
<dbReference type="PATRIC" id="fig|93061.5.peg.1120"/>
<dbReference type="eggNOG" id="COG0550">
    <property type="taxonomic scope" value="Bacteria"/>
</dbReference>
<dbReference type="HOGENOM" id="CLU_002929_4_3_9"/>
<dbReference type="OrthoDB" id="9804262at2"/>
<dbReference type="Proteomes" id="UP000008816">
    <property type="component" value="Chromosome"/>
</dbReference>
<dbReference type="GO" id="GO:0005694">
    <property type="term" value="C:chromosome"/>
    <property type="evidence" value="ECO:0007669"/>
    <property type="project" value="InterPro"/>
</dbReference>
<dbReference type="GO" id="GO:0003677">
    <property type="term" value="F:DNA binding"/>
    <property type="evidence" value="ECO:0007669"/>
    <property type="project" value="UniProtKB-KW"/>
</dbReference>
<dbReference type="GO" id="GO:0003917">
    <property type="term" value="F:DNA topoisomerase type I (single strand cut, ATP-independent) activity"/>
    <property type="evidence" value="ECO:0007669"/>
    <property type="project" value="UniProtKB-UniRule"/>
</dbReference>
<dbReference type="GO" id="GO:0008270">
    <property type="term" value="F:zinc ion binding"/>
    <property type="evidence" value="ECO:0007669"/>
    <property type="project" value="UniProtKB-KW"/>
</dbReference>
<dbReference type="GO" id="GO:0006265">
    <property type="term" value="P:DNA topological change"/>
    <property type="evidence" value="ECO:0007669"/>
    <property type="project" value="UniProtKB-UniRule"/>
</dbReference>
<dbReference type="CDD" id="cd00186">
    <property type="entry name" value="TOP1Ac"/>
    <property type="match status" value="1"/>
</dbReference>
<dbReference type="CDD" id="cd03363">
    <property type="entry name" value="TOPRIM_TopoIA_TopoI"/>
    <property type="match status" value="1"/>
</dbReference>
<dbReference type="Gene3D" id="3.40.50.140">
    <property type="match status" value="1"/>
</dbReference>
<dbReference type="Gene3D" id="3.30.65.10">
    <property type="entry name" value="Bacterial Topoisomerase I, domain 1"/>
    <property type="match status" value="2"/>
</dbReference>
<dbReference type="Gene3D" id="1.10.460.10">
    <property type="entry name" value="Topoisomerase I, domain 2"/>
    <property type="match status" value="1"/>
</dbReference>
<dbReference type="Gene3D" id="2.70.20.10">
    <property type="entry name" value="Topoisomerase I, domain 3"/>
    <property type="match status" value="1"/>
</dbReference>
<dbReference type="Gene3D" id="1.10.290.10">
    <property type="entry name" value="Topoisomerase I, domain 4"/>
    <property type="match status" value="1"/>
</dbReference>
<dbReference type="HAMAP" id="MF_00952">
    <property type="entry name" value="Topoisom_1_prok"/>
    <property type="match status" value="1"/>
</dbReference>
<dbReference type="InterPro" id="IPR000380">
    <property type="entry name" value="Topo_IA"/>
</dbReference>
<dbReference type="InterPro" id="IPR003601">
    <property type="entry name" value="Topo_IA_2"/>
</dbReference>
<dbReference type="InterPro" id="IPR023406">
    <property type="entry name" value="Topo_IA_AS"/>
</dbReference>
<dbReference type="InterPro" id="IPR013497">
    <property type="entry name" value="Topo_IA_cen"/>
</dbReference>
<dbReference type="InterPro" id="IPR013824">
    <property type="entry name" value="Topo_IA_cen_sub1"/>
</dbReference>
<dbReference type="InterPro" id="IPR013825">
    <property type="entry name" value="Topo_IA_cen_sub2"/>
</dbReference>
<dbReference type="InterPro" id="IPR013826">
    <property type="entry name" value="Topo_IA_cen_sub3"/>
</dbReference>
<dbReference type="InterPro" id="IPR023405">
    <property type="entry name" value="Topo_IA_core_domain"/>
</dbReference>
<dbReference type="InterPro" id="IPR003602">
    <property type="entry name" value="Topo_IA_DNA-bd_dom"/>
</dbReference>
<dbReference type="InterPro" id="IPR013498">
    <property type="entry name" value="Topo_IA_Znf"/>
</dbReference>
<dbReference type="InterPro" id="IPR005733">
    <property type="entry name" value="TopoI_bac-type"/>
</dbReference>
<dbReference type="InterPro" id="IPR028612">
    <property type="entry name" value="Topoisom_1_IA"/>
</dbReference>
<dbReference type="InterPro" id="IPR006171">
    <property type="entry name" value="TOPRIM_dom"/>
</dbReference>
<dbReference type="InterPro" id="IPR034149">
    <property type="entry name" value="TOPRIM_TopoI"/>
</dbReference>
<dbReference type="NCBIfam" id="TIGR01051">
    <property type="entry name" value="topA_bact"/>
    <property type="match status" value="1"/>
</dbReference>
<dbReference type="PANTHER" id="PTHR42785:SF1">
    <property type="entry name" value="DNA TOPOISOMERASE"/>
    <property type="match status" value="1"/>
</dbReference>
<dbReference type="PANTHER" id="PTHR42785">
    <property type="entry name" value="DNA TOPOISOMERASE, TYPE IA, CORE"/>
    <property type="match status" value="1"/>
</dbReference>
<dbReference type="Pfam" id="PF01131">
    <property type="entry name" value="Topoisom_bac"/>
    <property type="match status" value="1"/>
</dbReference>
<dbReference type="Pfam" id="PF01751">
    <property type="entry name" value="Toprim"/>
    <property type="match status" value="1"/>
</dbReference>
<dbReference type="Pfam" id="PF01396">
    <property type="entry name" value="Zn_ribbon_Top1"/>
    <property type="match status" value="3"/>
</dbReference>
<dbReference type="PRINTS" id="PR00417">
    <property type="entry name" value="PRTPISMRASEI"/>
</dbReference>
<dbReference type="SMART" id="SM00437">
    <property type="entry name" value="TOP1Ac"/>
    <property type="match status" value="1"/>
</dbReference>
<dbReference type="SMART" id="SM00436">
    <property type="entry name" value="TOP1Bc"/>
    <property type="match status" value="1"/>
</dbReference>
<dbReference type="SMART" id="SM00493">
    <property type="entry name" value="TOPRIM"/>
    <property type="match status" value="1"/>
</dbReference>
<dbReference type="SUPFAM" id="SSF56712">
    <property type="entry name" value="Prokaryotic type I DNA topoisomerase"/>
    <property type="match status" value="1"/>
</dbReference>
<dbReference type="PROSITE" id="PS00396">
    <property type="entry name" value="TOPO_IA_1"/>
    <property type="match status" value="1"/>
</dbReference>
<dbReference type="PROSITE" id="PS52039">
    <property type="entry name" value="TOPO_IA_2"/>
    <property type="match status" value="1"/>
</dbReference>
<dbReference type="PROSITE" id="PS50880">
    <property type="entry name" value="TOPRIM"/>
    <property type="match status" value="1"/>
</dbReference>
<accession>Q2FZ32</accession>
<keyword id="KW-0238">DNA-binding</keyword>
<keyword id="KW-0413">Isomerase</keyword>
<keyword id="KW-0460">Magnesium</keyword>
<keyword id="KW-0479">Metal-binding</keyword>
<keyword id="KW-1185">Reference proteome</keyword>
<keyword id="KW-0677">Repeat</keyword>
<keyword id="KW-0799">Topoisomerase</keyword>
<keyword id="KW-0862">Zinc</keyword>
<keyword id="KW-0863">Zinc-finger</keyword>
<proteinExistence type="inferred from homology"/>
<name>TOP1_STAA8</name>
<organism>
    <name type="scientific">Staphylococcus aureus (strain NCTC 8325 / PS 47)</name>
    <dbReference type="NCBI Taxonomy" id="93061"/>
    <lineage>
        <taxon>Bacteria</taxon>
        <taxon>Bacillati</taxon>
        <taxon>Bacillota</taxon>
        <taxon>Bacilli</taxon>
        <taxon>Bacillales</taxon>
        <taxon>Staphylococcaceae</taxon>
        <taxon>Staphylococcus</taxon>
    </lineage>
</organism>